<organism>
    <name type="scientific">Salinispora tropica (strain ATCC BAA-916 / DSM 44818 / JCM 13857 / NBRC 105044 / CNB-440)</name>
    <dbReference type="NCBI Taxonomy" id="369723"/>
    <lineage>
        <taxon>Bacteria</taxon>
        <taxon>Bacillati</taxon>
        <taxon>Actinomycetota</taxon>
        <taxon>Actinomycetes</taxon>
        <taxon>Micromonosporales</taxon>
        <taxon>Micromonosporaceae</taxon>
        <taxon>Salinispora</taxon>
    </lineage>
</organism>
<name>RL17_SALTO</name>
<accession>A4XBL7</accession>
<keyword id="KW-1185">Reference proteome</keyword>
<keyword id="KW-0687">Ribonucleoprotein</keyword>
<keyword id="KW-0689">Ribosomal protein</keyword>
<reference key="1">
    <citation type="journal article" date="2007" name="Proc. Natl. Acad. Sci. U.S.A.">
        <title>Genome sequencing reveals complex secondary metabolome in the marine actinomycete Salinispora tropica.</title>
        <authorList>
            <person name="Udwary D.W."/>
            <person name="Zeigler L."/>
            <person name="Asolkar R.N."/>
            <person name="Singan V."/>
            <person name="Lapidus A."/>
            <person name="Fenical W."/>
            <person name="Jensen P.R."/>
            <person name="Moore B.S."/>
        </authorList>
    </citation>
    <scope>NUCLEOTIDE SEQUENCE [LARGE SCALE GENOMIC DNA]</scope>
    <source>
        <strain>ATCC BAA-916 / DSM 44818 / JCM 13857 / NBRC 105044 / CNB-440</strain>
    </source>
</reference>
<dbReference type="EMBL" id="CP000667">
    <property type="protein sequence ID" value="ABP56324.1"/>
    <property type="molecule type" value="Genomic_DNA"/>
</dbReference>
<dbReference type="RefSeq" id="WP_012015099.1">
    <property type="nucleotide sequence ID" value="NC_009380.1"/>
</dbReference>
<dbReference type="SMR" id="A4XBL7"/>
<dbReference type="STRING" id="369723.Strop_3894"/>
<dbReference type="KEGG" id="stp:Strop_3894"/>
<dbReference type="PATRIC" id="fig|369723.5.peg.4019"/>
<dbReference type="eggNOG" id="COG0203">
    <property type="taxonomic scope" value="Bacteria"/>
</dbReference>
<dbReference type="HOGENOM" id="CLU_074407_0_0_11"/>
<dbReference type="Proteomes" id="UP000000235">
    <property type="component" value="Chromosome"/>
</dbReference>
<dbReference type="GO" id="GO:0022625">
    <property type="term" value="C:cytosolic large ribosomal subunit"/>
    <property type="evidence" value="ECO:0007669"/>
    <property type="project" value="TreeGrafter"/>
</dbReference>
<dbReference type="GO" id="GO:0003735">
    <property type="term" value="F:structural constituent of ribosome"/>
    <property type="evidence" value="ECO:0007669"/>
    <property type="project" value="InterPro"/>
</dbReference>
<dbReference type="GO" id="GO:0006412">
    <property type="term" value="P:translation"/>
    <property type="evidence" value="ECO:0007669"/>
    <property type="project" value="UniProtKB-UniRule"/>
</dbReference>
<dbReference type="FunFam" id="3.90.1030.10:FF:000001">
    <property type="entry name" value="50S ribosomal protein L17"/>
    <property type="match status" value="1"/>
</dbReference>
<dbReference type="Gene3D" id="3.90.1030.10">
    <property type="entry name" value="Ribosomal protein L17"/>
    <property type="match status" value="1"/>
</dbReference>
<dbReference type="HAMAP" id="MF_01368">
    <property type="entry name" value="Ribosomal_bL17"/>
    <property type="match status" value="1"/>
</dbReference>
<dbReference type="InterPro" id="IPR000456">
    <property type="entry name" value="Ribosomal_bL17"/>
</dbReference>
<dbReference type="InterPro" id="IPR047859">
    <property type="entry name" value="Ribosomal_bL17_CS"/>
</dbReference>
<dbReference type="InterPro" id="IPR036373">
    <property type="entry name" value="Ribosomal_bL17_sf"/>
</dbReference>
<dbReference type="NCBIfam" id="TIGR00059">
    <property type="entry name" value="L17"/>
    <property type="match status" value="1"/>
</dbReference>
<dbReference type="PANTHER" id="PTHR14413:SF16">
    <property type="entry name" value="LARGE RIBOSOMAL SUBUNIT PROTEIN BL17M"/>
    <property type="match status" value="1"/>
</dbReference>
<dbReference type="PANTHER" id="PTHR14413">
    <property type="entry name" value="RIBOSOMAL PROTEIN L17"/>
    <property type="match status" value="1"/>
</dbReference>
<dbReference type="Pfam" id="PF01196">
    <property type="entry name" value="Ribosomal_L17"/>
    <property type="match status" value="1"/>
</dbReference>
<dbReference type="SUPFAM" id="SSF64263">
    <property type="entry name" value="Prokaryotic ribosomal protein L17"/>
    <property type="match status" value="1"/>
</dbReference>
<dbReference type="PROSITE" id="PS01167">
    <property type="entry name" value="RIBOSOMAL_L17"/>
    <property type="match status" value="1"/>
</dbReference>
<gene>
    <name evidence="1" type="primary">rplQ</name>
    <name type="ordered locus">Strop_3894</name>
</gene>
<sequence>MPTPTKGARLGGSPAHERLMLANLAMSLFQHGKIQTTETKARRLRPLAEQLITKAKRGDLASRRRVLGVVKDKDVVYTLFEQIAPRYANRNGGYTRIVKTGPRKGDAAPMAIIELVEELAVAQPKANKKTAGRKAAQQDKVEALAPAEETPAPTSGDQDAEAPVSVSGDTAAARADSDLAVEENNEQNKA</sequence>
<comment type="subunit">
    <text evidence="1">Part of the 50S ribosomal subunit. Contacts protein L32.</text>
</comment>
<comment type="similarity">
    <text evidence="1">Belongs to the bacterial ribosomal protein bL17 family.</text>
</comment>
<evidence type="ECO:0000255" key="1">
    <source>
        <dbReference type="HAMAP-Rule" id="MF_01368"/>
    </source>
</evidence>
<evidence type="ECO:0000256" key="2">
    <source>
        <dbReference type="SAM" id="MobiDB-lite"/>
    </source>
</evidence>
<evidence type="ECO:0000305" key="3"/>
<feature type="chain" id="PRO_1000087191" description="Large ribosomal subunit protein bL17">
    <location>
        <begin position="1"/>
        <end position="190"/>
    </location>
</feature>
<feature type="region of interest" description="Disordered" evidence="2">
    <location>
        <begin position="128"/>
        <end position="190"/>
    </location>
</feature>
<feature type="compositionally biased region" description="Low complexity" evidence="2">
    <location>
        <begin position="143"/>
        <end position="154"/>
    </location>
</feature>
<feature type="compositionally biased region" description="Acidic residues" evidence="2">
    <location>
        <begin position="179"/>
        <end position="190"/>
    </location>
</feature>
<protein>
    <recommendedName>
        <fullName evidence="1">Large ribosomal subunit protein bL17</fullName>
    </recommendedName>
    <alternativeName>
        <fullName evidence="3">50S ribosomal protein L17</fullName>
    </alternativeName>
</protein>
<proteinExistence type="inferred from homology"/>